<name>HIS6_ECOSE</name>
<proteinExistence type="inferred from homology"/>
<feature type="chain" id="PRO_1000134999" description="Imidazole glycerol phosphate synthase subunit HisF">
    <location>
        <begin position="1"/>
        <end position="258"/>
    </location>
</feature>
<feature type="active site" evidence="1">
    <location>
        <position position="11"/>
    </location>
</feature>
<feature type="active site" evidence="1">
    <location>
        <position position="130"/>
    </location>
</feature>
<protein>
    <recommendedName>
        <fullName evidence="1">Imidazole glycerol phosphate synthase subunit HisF</fullName>
        <ecNumber evidence="1">4.3.2.10</ecNumber>
    </recommendedName>
    <alternativeName>
        <fullName evidence="1">IGP synthase cyclase subunit</fullName>
    </alternativeName>
    <alternativeName>
        <fullName evidence="1">IGP synthase subunit HisF</fullName>
    </alternativeName>
    <alternativeName>
        <fullName evidence="1">ImGP synthase subunit HisF</fullName>
        <shortName evidence="1">IGPS subunit HisF</shortName>
    </alternativeName>
</protein>
<dbReference type="EC" id="4.3.2.10" evidence="1"/>
<dbReference type="EMBL" id="AP009240">
    <property type="protein sequence ID" value="BAG77823.1"/>
    <property type="molecule type" value="Genomic_DNA"/>
</dbReference>
<dbReference type="RefSeq" id="WP_000880161.1">
    <property type="nucleotide sequence ID" value="NC_011415.1"/>
</dbReference>
<dbReference type="SMR" id="B6I896"/>
<dbReference type="KEGG" id="ecy:ECSE_2299"/>
<dbReference type="HOGENOM" id="CLU_048577_4_0_6"/>
<dbReference type="UniPathway" id="UPA00031">
    <property type="reaction ID" value="UER00010"/>
</dbReference>
<dbReference type="Proteomes" id="UP000008199">
    <property type="component" value="Chromosome"/>
</dbReference>
<dbReference type="GO" id="GO:0005737">
    <property type="term" value="C:cytoplasm"/>
    <property type="evidence" value="ECO:0007669"/>
    <property type="project" value="UniProtKB-SubCell"/>
</dbReference>
<dbReference type="GO" id="GO:0000107">
    <property type="term" value="F:imidazoleglycerol-phosphate synthase activity"/>
    <property type="evidence" value="ECO:0007669"/>
    <property type="project" value="UniProtKB-UniRule"/>
</dbReference>
<dbReference type="GO" id="GO:0016829">
    <property type="term" value="F:lyase activity"/>
    <property type="evidence" value="ECO:0007669"/>
    <property type="project" value="UniProtKB-KW"/>
</dbReference>
<dbReference type="GO" id="GO:0000105">
    <property type="term" value="P:L-histidine biosynthetic process"/>
    <property type="evidence" value="ECO:0007669"/>
    <property type="project" value="UniProtKB-UniRule"/>
</dbReference>
<dbReference type="CDD" id="cd04731">
    <property type="entry name" value="HisF"/>
    <property type="match status" value="1"/>
</dbReference>
<dbReference type="FunFam" id="3.20.20.70:FF:000006">
    <property type="entry name" value="Imidazole glycerol phosphate synthase subunit HisF"/>
    <property type="match status" value="1"/>
</dbReference>
<dbReference type="Gene3D" id="3.20.20.70">
    <property type="entry name" value="Aldolase class I"/>
    <property type="match status" value="1"/>
</dbReference>
<dbReference type="HAMAP" id="MF_01013">
    <property type="entry name" value="HisF"/>
    <property type="match status" value="1"/>
</dbReference>
<dbReference type="InterPro" id="IPR013785">
    <property type="entry name" value="Aldolase_TIM"/>
</dbReference>
<dbReference type="InterPro" id="IPR006062">
    <property type="entry name" value="His_biosynth"/>
</dbReference>
<dbReference type="InterPro" id="IPR004651">
    <property type="entry name" value="HisF"/>
</dbReference>
<dbReference type="InterPro" id="IPR050064">
    <property type="entry name" value="IGPS_HisA/HisF"/>
</dbReference>
<dbReference type="InterPro" id="IPR011060">
    <property type="entry name" value="RibuloseP-bd_barrel"/>
</dbReference>
<dbReference type="NCBIfam" id="TIGR00735">
    <property type="entry name" value="hisF"/>
    <property type="match status" value="1"/>
</dbReference>
<dbReference type="PANTHER" id="PTHR21235:SF2">
    <property type="entry name" value="IMIDAZOLE GLYCEROL PHOSPHATE SYNTHASE HISHF"/>
    <property type="match status" value="1"/>
</dbReference>
<dbReference type="PANTHER" id="PTHR21235">
    <property type="entry name" value="IMIDAZOLE GLYCEROL PHOSPHATE SYNTHASE SUBUNIT HISF/H IGP SYNTHASE SUBUNIT HISF/H"/>
    <property type="match status" value="1"/>
</dbReference>
<dbReference type="Pfam" id="PF00977">
    <property type="entry name" value="His_biosynth"/>
    <property type="match status" value="1"/>
</dbReference>
<dbReference type="SUPFAM" id="SSF51366">
    <property type="entry name" value="Ribulose-phoshate binding barrel"/>
    <property type="match status" value="1"/>
</dbReference>
<organism>
    <name type="scientific">Escherichia coli (strain SE11)</name>
    <dbReference type="NCBI Taxonomy" id="409438"/>
    <lineage>
        <taxon>Bacteria</taxon>
        <taxon>Pseudomonadati</taxon>
        <taxon>Pseudomonadota</taxon>
        <taxon>Gammaproteobacteria</taxon>
        <taxon>Enterobacterales</taxon>
        <taxon>Enterobacteriaceae</taxon>
        <taxon>Escherichia</taxon>
    </lineage>
</organism>
<comment type="function">
    <text evidence="1">IGPS catalyzes the conversion of PRFAR and glutamine to IGP, AICAR and glutamate. The HisF subunit catalyzes the cyclization activity that produces IGP and AICAR from PRFAR using the ammonia provided by the HisH subunit.</text>
</comment>
<comment type="catalytic activity">
    <reaction evidence="1">
        <text>5-[(5-phospho-1-deoxy-D-ribulos-1-ylimino)methylamino]-1-(5-phospho-beta-D-ribosyl)imidazole-4-carboxamide + L-glutamine = D-erythro-1-(imidazol-4-yl)glycerol 3-phosphate + 5-amino-1-(5-phospho-beta-D-ribosyl)imidazole-4-carboxamide + L-glutamate + H(+)</text>
        <dbReference type="Rhea" id="RHEA:24793"/>
        <dbReference type="ChEBI" id="CHEBI:15378"/>
        <dbReference type="ChEBI" id="CHEBI:29985"/>
        <dbReference type="ChEBI" id="CHEBI:58278"/>
        <dbReference type="ChEBI" id="CHEBI:58359"/>
        <dbReference type="ChEBI" id="CHEBI:58475"/>
        <dbReference type="ChEBI" id="CHEBI:58525"/>
        <dbReference type="EC" id="4.3.2.10"/>
    </reaction>
</comment>
<comment type="pathway">
    <text evidence="1">Amino-acid biosynthesis; L-histidine biosynthesis; L-histidine from 5-phospho-alpha-D-ribose 1-diphosphate: step 5/9.</text>
</comment>
<comment type="subunit">
    <text evidence="1">Heterodimer of HisH and HisF.</text>
</comment>
<comment type="subcellular location">
    <subcellularLocation>
        <location evidence="1">Cytoplasm</location>
    </subcellularLocation>
</comment>
<comment type="similarity">
    <text evidence="1">Belongs to the HisA/HisF family.</text>
</comment>
<keyword id="KW-0028">Amino-acid biosynthesis</keyword>
<keyword id="KW-0963">Cytoplasm</keyword>
<keyword id="KW-0368">Histidine biosynthesis</keyword>
<keyword id="KW-0456">Lyase</keyword>
<gene>
    <name evidence="1" type="primary">hisF</name>
    <name type="ordered locus">ECSE_2299</name>
</gene>
<reference key="1">
    <citation type="journal article" date="2008" name="DNA Res.">
        <title>Complete genome sequence and comparative analysis of the wild-type commensal Escherichia coli strain SE11 isolated from a healthy adult.</title>
        <authorList>
            <person name="Oshima K."/>
            <person name="Toh H."/>
            <person name="Ogura Y."/>
            <person name="Sasamoto H."/>
            <person name="Morita H."/>
            <person name="Park S.-H."/>
            <person name="Ooka T."/>
            <person name="Iyoda S."/>
            <person name="Taylor T.D."/>
            <person name="Hayashi T."/>
            <person name="Itoh K."/>
            <person name="Hattori M."/>
        </authorList>
    </citation>
    <scope>NUCLEOTIDE SEQUENCE [LARGE SCALE GENOMIC DNA]</scope>
    <source>
        <strain>SE11</strain>
    </source>
</reference>
<sequence>MLAKRIIPCLDVRDGQVVKGVQFRNHEIIGDIVPLAKRYAEEGADELVFYDITASSDGRVVDKSWVSRVAEVIDIPFCVAGGIKSLDDAAKILSFGADKISINSPALADPTLITRLADRFGVQCIVVGIDTWYDGETGKYHVNQYTGDESRTRVTQWETLDWVQEVQKRGAGEIVLNMMNQDGVRNGYDLEQLKKVREVCHVPLIASGGAGTMEHFLEAFRDADVDGALAASVFHKQIINIGELKAYLATQGVEIRIC</sequence>
<evidence type="ECO:0000255" key="1">
    <source>
        <dbReference type="HAMAP-Rule" id="MF_01013"/>
    </source>
</evidence>
<accession>B6I896</accession>